<feature type="chain" id="PRO_0000384279" description="Mitochondrial distribution and morphology protein 12">
    <location>
        <begin position="1"/>
        <end position="257"/>
    </location>
</feature>
<feature type="domain" description="SMP-LTD" evidence="1">
    <location>
        <begin position="1"/>
        <end position="256"/>
    </location>
</feature>
<feature type="region of interest" description="Disordered" evidence="2">
    <location>
        <begin position="74"/>
        <end position="98"/>
    </location>
</feature>
<keyword id="KW-0256">Endoplasmic reticulum</keyword>
<keyword id="KW-0445">Lipid transport</keyword>
<keyword id="KW-0446">Lipid-binding</keyword>
<keyword id="KW-0472">Membrane</keyword>
<keyword id="KW-0496">Mitochondrion</keyword>
<keyword id="KW-1000">Mitochondrion outer membrane</keyword>
<keyword id="KW-1185">Reference proteome</keyword>
<keyword id="KW-0813">Transport</keyword>
<evidence type="ECO:0000255" key="1">
    <source>
        <dbReference type="HAMAP-Rule" id="MF_03104"/>
    </source>
</evidence>
<evidence type="ECO:0000256" key="2">
    <source>
        <dbReference type="SAM" id="MobiDB-lite"/>
    </source>
</evidence>
<proteinExistence type="inferred from homology"/>
<organism>
    <name type="scientific">Candida glabrata (strain ATCC 2001 / BCRC 20586 / JCM 3761 / NBRC 0622 / NRRL Y-65 / CBS 138)</name>
    <name type="common">Yeast</name>
    <name type="synonym">Nakaseomyces glabratus</name>
    <dbReference type="NCBI Taxonomy" id="284593"/>
    <lineage>
        <taxon>Eukaryota</taxon>
        <taxon>Fungi</taxon>
        <taxon>Dikarya</taxon>
        <taxon>Ascomycota</taxon>
        <taxon>Saccharomycotina</taxon>
        <taxon>Saccharomycetes</taxon>
        <taxon>Saccharomycetales</taxon>
        <taxon>Saccharomycetaceae</taxon>
        <taxon>Nakaseomyces</taxon>
    </lineage>
</organism>
<comment type="function">
    <text evidence="1">Component of the ERMES/MDM complex, which serves as a molecular tether to connect the endoplasmic reticulum (ER) and mitochondria. Components of this complex are involved in the control of mitochondrial shape and protein biogenesis, and function in nonvesicular lipid trafficking between the ER and mitochondria. MDM12 is required for the interaction of the ER-resident membrane protein MMM1 and the outer mitochondrial membrane-resident beta-barrel protein MDM10. The MDM12-MMM1 subcomplex functions in the major beta-barrel assembly pathway that is responsible for biogenesis of all mitochondrial outer membrane beta-barrel proteins, and acts in a late step after the SAM complex. The MDM10-MDM12-MMM1 subcomplex further acts in the TOM40-specific pathway after the action of the MDM12-MMM1 complex. Essential for establishing and maintaining the structure of mitochondria and maintenance of mtDNA nucleoids.</text>
</comment>
<comment type="subunit">
    <text evidence="1">Component of the ER-mitochondria encounter structure (ERMES) or MDM complex, composed of MMM1, MDM10, MDM12 and MDM34. A MMM1 homodimer associates with one molecule of MDM12 on each side in a pairwise head-to-tail manner, and the SMP-LTD domains of MMM1 and MDM12 generate a continuous hydrophobic tunnel for phospholipid trafficking.</text>
</comment>
<comment type="subcellular location">
    <subcellularLocation>
        <location evidence="1">Mitochondrion outer membrane</location>
        <topology evidence="1">Peripheral membrane protein</topology>
        <orientation evidence="1">Cytoplasmic side</orientation>
    </subcellularLocation>
    <subcellularLocation>
        <location evidence="1">Endoplasmic reticulum membrane</location>
        <topology evidence="1">Peripheral membrane protein</topology>
        <orientation evidence="1">Cytoplasmic side</orientation>
    </subcellularLocation>
    <text evidence="1">The ERMES/MDM complex localizes to a few discrete foci (around 10 per single cell), that represent mitochondria-endoplasmic reticulum junctions. These foci are often found next to mtDNA nucleoids.</text>
</comment>
<comment type="domain">
    <text evidence="1">The SMP-LTD domain is a barrel-like domain that can bind various types of glycerophospholipids in its interior and mediate their transfer between two adjacent bilayers.</text>
</comment>
<comment type="similarity">
    <text evidence="1">Belongs to the MDM12 family.</text>
</comment>
<name>MDM12_CANGA</name>
<accession>Q6FVF2</accession>
<protein>
    <recommendedName>
        <fullName evidence="1">Mitochondrial distribution and morphology protein 12</fullName>
    </recommendedName>
    <alternativeName>
        <fullName evidence="1">Mitochondrial inheritance component MDM12</fullName>
    </alternativeName>
</protein>
<sequence length="257" mass="29212">MSFEINWEKLSSDSDLTSNIREGLNGYFQELELPSYVRAIELVDFGFGKIAPNITLREISSPLQDFYDAVNEEYEEDNETSSEMHGRDGQNVGESGEEAVVEKKETDTQFLIEFEYKGDMSLTLTAELVLNYPVERFMTLPLKISISNIGLHSLCLVSYLAKQVFISMLCDVSDPVLDDVDCVLDPNGPVLLANKPLERISIIRSMKIETEIGDRFKDDGSTLRSVGQLEEFIVQKLKDFLRKELAWPSWVNLDFND</sequence>
<dbReference type="EMBL" id="CR380951">
    <property type="protein sequence ID" value="CAG58711.1"/>
    <property type="molecule type" value="Genomic_DNA"/>
</dbReference>
<dbReference type="RefSeq" id="XP_445792.1">
    <property type="nucleotide sequence ID" value="XM_445792.1"/>
</dbReference>
<dbReference type="SMR" id="Q6FVF2"/>
<dbReference type="FunCoup" id="Q6FVF2">
    <property type="interactions" value="73"/>
</dbReference>
<dbReference type="STRING" id="284593.Q6FVF2"/>
<dbReference type="EnsemblFungi" id="CAGL0E02365g-T">
    <property type="protein sequence ID" value="CAGL0E02365g-T-p1"/>
    <property type="gene ID" value="CAGL0E02365g"/>
</dbReference>
<dbReference type="KEGG" id="cgr:2887543"/>
<dbReference type="CGD" id="CAL0128774">
    <property type="gene designation" value="MDM12"/>
</dbReference>
<dbReference type="VEuPathDB" id="FungiDB:B1J91_E02365g"/>
<dbReference type="VEuPathDB" id="FungiDB:CAGL0E02365g"/>
<dbReference type="eggNOG" id="ENOG502QQS2">
    <property type="taxonomic scope" value="Eukaryota"/>
</dbReference>
<dbReference type="HOGENOM" id="CLU_026794_2_0_1"/>
<dbReference type="InParanoid" id="Q6FVF2"/>
<dbReference type="OMA" id="AAWPSWI"/>
<dbReference type="Proteomes" id="UP000002428">
    <property type="component" value="Chromosome E"/>
</dbReference>
<dbReference type="GO" id="GO:0005789">
    <property type="term" value="C:endoplasmic reticulum membrane"/>
    <property type="evidence" value="ECO:0007669"/>
    <property type="project" value="UniProtKB-SubCell"/>
</dbReference>
<dbReference type="GO" id="GO:0032865">
    <property type="term" value="C:ERMES complex"/>
    <property type="evidence" value="ECO:0007669"/>
    <property type="project" value="UniProtKB-UniRule"/>
</dbReference>
<dbReference type="GO" id="GO:0008289">
    <property type="term" value="F:lipid binding"/>
    <property type="evidence" value="ECO:0007669"/>
    <property type="project" value="UniProtKB-KW"/>
</dbReference>
<dbReference type="GO" id="GO:0120013">
    <property type="term" value="F:lipid transfer activity"/>
    <property type="evidence" value="ECO:0007669"/>
    <property type="project" value="EnsemblFungi"/>
</dbReference>
<dbReference type="GO" id="GO:0015917">
    <property type="term" value="P:aminophospholipid transport"/>
    <property type="evidence" value="ECO:0007669"/>
    <property type="project" value="EnsemblFungi"/>
</dbReference>
<dbReference type="GO" id="GO:0000002">
    <property type="term" value="P:mitochondrial genome maintenance"/>
    <property type="evidence" value="ECO:0007669"/>
    <property type="project" value="UniProtKB-UniRule"/>
</dbReference>
<dbReference type="GO" id="GO:0070096">
    <property type="term" value="P:mitochondrial outer membrane translocase complex assembly"/>
    <property type="evidence" value="ECO:0007669"/>
    <property type="project" value="EnsemblFungi"/>
</dbReference>
<dbReference type="GO" id="GO:0000001">
    <property type="term" value="P:mitochondrion inheritance"/>
    <property type="evidence" value="ECO:0007669"/>
    <property type="project" value="EnsemblFungi"/>
</dbReference>
<dbReference type="GO" id="GO:1990456">
    <property type="term" value="P:mitochondrion-endoplasmic reticulum membrane tethering"/>
    <property type="evidence" value="ECO:0007669"/>
    <property type="project" value="EnsemblFungi"/>
</dbReference>
<dbReference type="GO" id="GO:0007031">
    <property type="term" value="P:peroxisome organization"/>
    <property type="evidence" value="ECO:0007669"/>
    <property type="project" value="EnsemblFungi"/>
</dbReference>
<dbReference type="GO" id="GO:0045040">
    <property type="term" value="P:protein insertion into mitochondrial outer membrane"/>
    <property type="evidence" value="ECO:0007669"/>
    <property type="project" value="UniProtKB-UniRule"/>
</dbReference>
<dbReference type="CDD" id="cd21672">
    <property type="entry name" value="SMP_Mdm12"/>
    <property type="match status" value="1"/>
</dbReference>
<dbReference type="HAMAP" id="MF_03104">
    <property type="entry name" value="Mdm12"/>
    <property type="match status" value="1"/>
</dbReference>
<dbReference type="InterPro" id="IPR027532">
    <property type="entry name" value="Mdm12"/>
</dbReference>
<dbReference type="InterPro" id="IPR019411">
    <property type="entry name" value="MMM1_dom"/>
</dbReference>
<dbReference type="InterPro" id="IPR031468">
    <property type="entry name" value="SMP_LBD"/>
</dbReference>
<dbReference type="PANTHER" id="PTHR28204">
    <property type="entry name" value="MITOCHONDRIAL DISTRIBUTION AND MORPHOLOGY PROTEIN 12"/>
    <property type="match status" value="1"/>
</dbReference>
<dbReference type="PANTHER" id="PTHR28204:SF1">
    <property type="entry name" value="MITOCHONDRIAL DISTRIBUTION AND MORPHOLOGY PROTEIN 12"/>
    <property type="match status" value="1"/>
</dbReference>
<dbReference type="Pfam" id="PF10296">
    <property type="entry name" value="MMM1"/>
    <property type="match status" value="1"/>
</dbReference>
<dbReference type="PROSITE" id="PS51847">
    <property type="entry name" value="SMP"/>
    <property type="match status" value="1"/>
</dbReference>
<gene>
    <name evidence="1" type="primary">MDM12</name>
    <name type="ordered locus">CAGL0E02365g</name>
</gene>
<reference key="1">
    <citation type="journal article" date="2004" name="Nature">
        <title>Genome evolution in yeasts.</title>
        <authorList>
            <person name="Dujon B."/>
            <person name="Sherman D."/>
            <person name="Fischer G."/>
            <person name="Durrens P."/>
            <person name="Casaregola S."/>
            <person name="Lafontaine I."/>
            <person name="de Montigny J."/>
            <person name="Marck C."/>
            <person name="Neuveglise C."/>
            <person name="Talla E."/>
            <person name="Goffard N."/>
            <person name="Frangeul L."/>
            <person name="Aigle M."/>
            <person name="Anthouard V."/>
            <person name="Babour A."/>
            <person name="Barbe V."/>
            <person name="Barnay S."/>
            <person name="Blanchin S."/>
            <person name="Beckerich J.-M."/>
            <person name="Beyne E."/>
            <person name="Bleykasten C."/>
            <person name="Boisrame A."/>
            <person name="Boyer J."/>
            <person name="Cattolico L."/>
            <person name="Confanioleri F."/>
            <person name="de Daruvar A."/>
            <person name="Despons L."/>
            <person name="Fabre E."/>
            <person name="Fairhead C."/>
            <person name="Ferry-Dumazet H."/>
            <person name="Groppi A."/>
            <person name="Hantraye F."/>
            <person name="Hennequin C."/>
            <person name="Jauniaux N."/>
            <person name="Joyet P."/>
            <person name="Kachouri R."/>
            <person name="Kerrest A."/>
            <person name="Koszul R."/>
            <person name="Lemaire M."/>
            <person name="Lesur I."/>
            <person name="Ma L."/>
            <person name="Muller H."/>
            <person name="Nicaud J.-M."/>
            <person name="Nikolski M."/>
            <person name="Oztas S."/>
            <person name="Ozier-Kalogeropoulos O."/>
            <person name="Pellenz S."/>
            <person name="Potier S."/>
            <person name="Richard G.-F."/>
            <person name="Straub M.-L."/>
            <person name="Suleau A."/>
            <person name="Swennen D."/>
            <person name="Tekaia F."/>
            <person name="Wesolowski-Louvel M."/>
            <person name="Westhof E."/>
            <person name="Wirth B."/>
            <person name="Zeniou-Meyer M."/>
            <person name="Zivanovic Y."/>
            <person name="Bolotin-Fukuhara M."/>
            <person name="Thierry A."/>
            <person name="Bouchier C."/>
            <person name="Caudron B."/>
            <person name="Scarpelli C."/>
            <person name="Gaillardin C."/>
            <person name="Weissenbach J."/>
            <person name="Wincker P."/>
            <person name="Souciet J.-L."/>
        </authorList>
    </citation>
    <scope>NUCLEOTIDE SEQUENCE [LARGE SCALE GENOMIC DNA]</scope>
    <source>
        <strain>ATCC 2001 / BCRC 20586 / JCM 3761 / NBRC 0622 / NRRL Y-65 / CBS 138</strain>
    </source>
</reference>